<reference key="1">
    <citation type="journal article" date="1998" name="Nature">
        <title>The complete genome of the hyperthermophilic bacterium Aquifex aeolicus.</title>
        <authorList>
            <person name="Deckert G."/>
            <person name="Warren P.V."/>
            <person name="Gaasterland T."/>
            <person name="Young W.G."/>
            <person name="Lenox A.L."/>
            <person name="Graham D.E."/>
            <person name="Overbeek R."/>
            <person name="Snead M.A."/>
            <person name="Keller M."/>
            <person name="Aujay M."/>
            <person name="Huber R."/>
            <person name="Feldman R.A."/>
            <person name="Short J.M."/>
            <person name="Olsen G.J."/>
            <person name="Swanson R.V."/>
        </authorList>
    </citation>
    <scope>NUCLEOTIDE SEQUENCE [LARGE SCALE GENOMIC DNA]</scope>
    <source>
        <strain>VF5</strain>
    </source>
</reference>
<protein>
    <recommendedName>
        <fullName>Probable S-adenosylmethionine synthase</fullName>
        <shortName>AdoMet synthase</shortName>
        <ecNumber>2.5.1.6</ecNumber>
    </recommendedName>
    <alternativeName>
        <fullName>Methionine adenosyltransferase</fullName>
    </alternativeName>
</protein>
<comment type="function">
    <text evidence="1">Catalyzes the formation of S-adenosylmethionine from methionine and ATP.</text>
</comment>
<comment type="catalytic activity">
    <reaction>
        <text>L-methionine + ATP + H2O = S-adenosyl-L-methionine + phosphate + diphosphate</text>
        <dbReference type="Rhea" id="RHEA:21080"/>
        <dbReference type="ChEBI" id="CHEBI:15377"/>
        <dbReference type="ChEBI" id="CHEBI:30616"/>
        <dbReference type="ChEBI" id="CHEBI:33019"/>
        <dbReference type="ChEBI" id="CHEBI:43474"/>
        <dbReference type="ChEBI" id="CHEBI:57844"/>
        <dbReference type="ChEBI" id="CHEBI:59789"/>
        <dbReference type="EC" id="2.5.1.6"/>
    </reaction>
</comment>
<comment type="cofactor">
    <cofactor evidence="1">
        <name>Mg(2+)</name>
        <dbReference type="ChEBI" id="CHEBI:18420"/>
    </cofactor>
</comment>
<comment type="pathway">
    <text>Amino-acid biosynthesis; S-adenosyl-L-methionine biosynthesis; S-adenosyl-L-methionine from L-methionine: step 1/1.</text>
</comment>
<comment type="similarity">
    <text evidence="3">Belongs to the AdoMet synthase 2 family.</text>
</comment>
<dbReference type="EC" id="2.5.1.6"/>
<dbReference type="EMBL" id="AE000657">
    <property type="protein sequence ID" value="AAC07239.1"/>
    <property type="molecule type" value="Genomic_DNA"/>
</dbReference>
<dbReference type="PIR" id="H70405">
    <property type="entry name" value="H70405"/>
</dbReference>
<dbReference type="RefSeq" id="NP_213839.1">
    <property type="nucleotide sequence ID" value="NC_000918.1"/>
</dbReference>
<dbReference type="RefSeq" id="WP_010880777.1">
    <property type="nucleotide sequence ID" value="NC_000918.1"/>
</dbReference>
<dbReference type="SMR" id="O67275"/>
<dbReference type="STRING" id="224324.aq_1226"/>
<dbReference type="EnsemblBacteria" id="AAC07239">
    <property type="protein sequence ID" value="AAC07239"/>
    <property type="gene ID" value="aq_1226"/>
</dbReference>
<dbReference type="KEGG" id="aae:aq_1226"/>
<dbReference type="PATRIC" id="fig|224324.8.peg.954"/>
<dbReference type="eggNOG" id="COG1812">
    <property type="taxonomic scope" value="Bacteria"/>
</dbReference>
<dbReference type="HOGENOM" id="CLU_057642_0_0_0"/>
<dbReference type="InParanoid" id="O67275"/>
<dbReference type="OrthoDB" id="9770738at2"/>
<dbReference type="UniPathway" id="UPA00315">
    <property type="reaction ID" value="UER00080"/>
</dbReference>
<dbReference type="Proteomes" id="UP000000798">
    <property type="component" value="Chromosome"/>
</dbReference>
<dbReference type="GO" id="GO:0005524">
    <property type="term" value="F:ATP binding"/>
    <property type="evidence" value="ECO:0007669"/>
    <property type="project" value="UniProtKB-UniRule"/>
</dbReference>
<dbReference type="GO" id="GO:0000287">
    <property type="term" value="F:magnesium ion binding"/>
    <property type="evidence" value="ECO:0007669"/>
    <property type="project" value="UniProtKB-UniRule"/>
</dbReference>
<dbReference type="GO" id="GO:0004478">
    <property type="term" value="F:methionine adenosyltransferase activity"/>
    <property type="evidence" value="ECO:0007669"/>
    <property type="project" value="UniProtKB-UniRule"/>
</dbReference>
<dbReference type="GO" id="GO:0006730">
    <property type="term" value="P:one-carbon metabolic process"/>
    <property type="evidence" value="ECO:0007669"/>
    <property type="project" value="UniProtKB-KW"/>
</dbReference>
<dbReference type="GO" id="GO:0006556">
    <property type="term" value="P:S-adenosylmethionine biosynthetic process"/>
    <property type="evidence" value="ECO:0007669"/>
    <property type="project" value="UniProtKB-UniRule"/>
</dbReference>
<dbReference type="Gene3D" id="3.30.300.10">
    <property type="match status" value="1"/>
</dbReference>
<dbReference type="Gene3D" id="3.30.300.280">
    <property type="entry name" value="S-adenosylmethionine synthetase, C-terminal domain"/>
    <property type="match status" value="1"/>
</dbReference>
<dbReference type="HAMAP" id="MF_00136">
    <property type="entry name" value="S_AdoMet_synth2"/>
    <property type="match status" value="1"/>
</dbReference>
<dbReference type="InterPro" id="IPR027790">
    <property type="entry name" value="AdoMet_synthase_2_family"/>
</dbReference>
<dbReference type="InterPro" id="IPR042544">
    <property type="entry name" value="AdoMet_synthase_3"/>
</dbReference>
<dbReference type="InterPro" id="IPR002795">
    <property type="entry name" value="S-AdoMet_synthetase_arc"/>
</dbReference>
<dbReference type="NCBIfam" id="NF003366">
    <property type="entry name" value="PRK04439.1-5"/>
    <property type="match status" value="1"/>
</dbReference>
<dbReference type="PANTHER" id="PTHR36697">
    <property type="entry name" value="S-ADENOSYLMETHIONINE SYNTHASE"/>
    <property type="match status" value="1"/>
</dbReference>
<dbReference type="PANTHER" id="PTHR36697:SF1">
    <property type="entry name" value="S-ADENOSYLMETHIONINE SYNTHASE"/>
    <property type="match status" value="1"/>
</dbReference>
<dbReference type="Pfam" id="PF01941">
    <property type="entry name" value="AdoMet_Synthase"/>
    <property type="match status" value="1"/>
</dbReference>
<sequence>MKNIVVTPMTFEPVYEQDAEIVERKGIGHPDTICDYLAEELSVALSKLYIERFGAIMHHNVDKALLVGGEANPVFGGGEVISPIEIYLVGRALKEYKGVTIPAEELAIEVAREWLKDNIRNLDPDTHVIIKPRIKPGSKDLVDLFLRFQQKGEVPLANDTSFGVGFAPLDDLERIVFETEQLLNSPSFKENHPYVGEDIKVMGVRIKDKVRITIACAFVSKYVENIQDYLEKKEHVRRIVEEMAQGLTQRQVEVFINTADDPERESVYITVTGTSAEQGDDGQVGRGNRVNGLITPYRPMSLEAAAGKNPVSHIGKIYNVVANVIADRVVSEIEEVEEAYCYLVSQIGKPINEPQVCDVKVRTKKDLKSLEEEIKRIAQEELEKMPETWKKFLNREYAVA</sequence>
<proteinExistence type="inferred from homology"/>
<organism>
    <name type="scientific">Aquifex aeolicus (strain VF5)</name>
    <dbReference type="NCBI Taxonomy" id="224324"/>
    <lineage>
        <taxon>Bacteria</taxon>
        <taxon>Pseudomonadati</taxon>
        <taxon>Aquificota</taxon>
        <taxon>Aquificia</taxon>
        <taxon>Aquificales</taxon>
        <taxon>Aquificaceae</taxon>
        <taxon>Aquifex</taxon>
    </lineage>
</organism>
<gene>
    <name type="primary">mat</name>
    <name type="ordered locus">aq_1226</name>
</gene>
<accession>O67275</accession>
<evidence type="ECO:0000250" key="1"/>
<evidence type="ECO:0000255" key="2"/>
<evidence type="ECO:0000305" key="3"/>
<keyword id="KW-0067">ATP-binding</keyword>
<keyword id="KW-0460">Magnesium</keyword>
<keyword id="KW-0547">Nucleotide-binding</keyword>
<keyword id="KW-0554">One-carbon metabolism</keyword>
<keyword id="KW-1185">Reference proteome</keyword>
<keyword id="KW-0808">Transferase</keyword>
<name>METL_AQUAE</name>
<feature type="chain" id="PRO_0000150045" description="Probable S-adenosylmethionine synthase">
    <location>
        <begin position="1"/>
        <end position="400"/>
    </location>
</feature>
<feature type="binding site" evidence="2">
    <location>
        <begin position="135"/>
        <end position="140"/>
    </location>
    <ligand>
        <name>ATP</name>
        <dbReference type="ChEBI" id="CHEBI:30616"/>
    </ligand>
</feature>